<organism>
    <name type="scientific">Brucella abortus (strain S19)</name>
    <dbReference type="NCBI Taxonomy" id="430066"/>
    <lineage>
        <taxon>Bacteria</taxon>
        <taxon>Pseudomonadati</taxon>
        <taxon>Pseudomonadota</taxon>
        <taxon>Alphaproteobacteria</taxon>
        <taxon>Hyphomicrobiales</taxon>
        <taxon>Brucellaceae</taxon>
        <taxon>Brucella/Ochrobactrum group</taxon>
        <taxon>Brucella</taxon>
    </lineage>
</organism>
<sequence>MARVKRGVTAHAKHKKVLDQAAGFRGRRKNTIRTAKAAVDRSKQYAYRDRKNRKRSFRALWIQRINAAVREQGLTYGRFIDGLAKAGIEIDRKVLSDIAIHEPEAFAALVASAKKALEYLKNTSMPNAFEGAVR</sequence>
<feature type="chain" id="PRO_1000122281" description="Large ribosomal subunit protein bL20">
    <location>
        <begin position="1"/>
        <end position="134"/>
    </location>
</feature>
<name>RL20_BRUA1</name>
<accession>B2S9B6</accession>
<keyword id="KW-0687">Ribonucleoprotein</keyword>
<keyword id="KW-0689">Ribosomal protein</keyword>
<keyword id="KW-0694">RNA-binding</keyword>
<keyword id="KW-0699">rRNA-binding</keyword>
<reference key="1">
    <citation type="journal article" date="2008" name="PLoS ONE">
        <title>Genome sequence of Brucella abortus vaccine strain S19 compared to virulent strains yields candidate virulence genes.</title>
        <authorList>
            <person name="Crasta O.R."/>
            <person name="Folkerts O."/>
            <person name="Fei Z."/>
            <person name="Mane S.P."/>
            <person name="Evans C."/>
            <person name="Martino-Catt S."/>
            <person name="Bricker B."/>
            <person name="Yu G."/>
            <person name="Du L."/>
            <person name="Sobral B.W."/>
        </authorList>
    </citation>
    <scope>NUCLEOTIDE SEQUENCE [LARGE SCALE GENOMIC DNA]</scope>
    <source>
        <strain>S19</strain>
    </source>
</reference>
<comment type="function">
    <text evidence="1">Binds directly to 23S ribosomal RNA and is necessary for the in vitro assembly process of the 50S ribosomal subunit. It is not involved in the protein synthesizing functions of that subunit.</text>
</comment>
<comment type="similarity">
    <text evidence="1">Belongs to the bacterial ribosomal protein bL20 family.</text>
</comment>
<protein>
    <recommendedName>
        <fullName evidence="1">Large ribosomal subunit protein bL20</fullName>
    </recommendedName>
    <alternativeName>
        <fullName evidence="2">50S ribosomal protein L20</fullName>
    </alternativeName>
</protein>
<evidence type="ECO:0000255" key="1">
    <source>
        <dbReference type="HAMAP-Rule" id="MF_00382"/>
    </source>
</evidence>
<evidence type="ECO:0000305" key="2"/>
<dbReference type="EMBL" id="CP000887">
    <property type="protein sequence ID" value="ACD73468.1"/>
    <property type="molecule type" value="Genomic_DNA"/>
</dbReference>
<dbReference type="RefSeq" id="WP_002965185.1">
    <property type="nucleotide sequence ID" value="NC_010742.1"/>
</dbReference>
<dbReference type="SMR" id="B2S9B6"/>
<dbReference type="GeneID" id="97534622"/>
<dbReference type="KEGG" id="bmc:BAbS19_I19860"/>
<dbReference type="HOGENOM" id="CLU_123265_0_1_5"/>
<dbReference type="Proteomes" id="UP000002565">
    <property type="component" value="Chromosome 1"/>
</dbReference>
<dbReference type="GO" id="GO:1990904">
    <property type="term" value="C:ribonucleoprotein complex"/>
    <property type="evidence" value="ECO:0007669"/>
    <property type="project" value="UniProtKB-KW"/>
</dbReference>
<dbReference type="GO" id="GO:0005840">
    <property type="term" value="C:ribosome"/>
    <property type="evidence" value="ECO:0007669"/>
    <property type="project" value="UniProtKB-KW"/>
</dbReference>
<dbReference type="GO" id="GO:0019843">
    <property type="term" value="F:rRNA binding"/>
    <property type="evidence" value="ECO:0007669"/>
    <property type="project" value="UniProtKB-UniRule"/>
</dbReference>
<dbReference type="GO" id="GO:0003735">
    <property type="term" value="F:structural constituent of ribosome"/>
    <property type="evidence" value="ECO:0007669"/>
    <property type="project" value="InterPro"/>
</dbReference>
<dbReference type="GO" id="GO:0000027">
    <property type="term" value="P:ribosomal large subunit assembly"/>
    <property type="evidence" value="ECO:0007669"/>
    <property type="project" value="UniProtKB-UniRule"/>
</dbReference>
<dbReference type="GO" id="GO:0006412">
    <property type="term" value="P:translation"/>
    <property type="evidence" value="ECO:0007669"/>
    <property type="project" value="InterPro"/>
</dbReference>
<dbReference type="CDD" id="cd07026">
    <property type="entry name" value="Ribosomal_L20"/>
    <property type="match status" value="1"/>
</dbReference>
<dbReference type="FunFam" id="1.10.1900.20:FF:000001">
    <property type="entry name" value="50S ribosomal protein L20"/>
    <property type="match status" value="1"/>
</dbReference>
<dbReference type="Gene3D" id="6.10.160.10">
    <property type="match status" value="1"/>
</dbReference>
<dbReference type="Gene3D" id="1.10.1900.20">
    <property type="entry name" value="Ribosomal protein L20"/>
    <property type="match status" value="1"/>
</dbReference>
<dbReference type="HAMAP" id="MF_00382">
    <property type="entry name" value="Ribosomal_bL20"/>
    <property type="match status" value="1"/>
</dbReference>
<dbReference type="InterPro" id="IPR005813">
    <property type="entry name" value="Ribosomal_bL20"/>
</dbReference>
<dbReference type="InterPro" id="IPR049946">
    <property type="entry name" value="RIBOSOMAL_L20_CS"/>
</dbReference>
<dbReference type="InterPro" id="IPR035566">
    <property type="entry name" value="Ribosomal_protein_bL20_C"/>
</dbReference>
<dbReference type="NCBIfam" id="TIGR01032">
    <property type="entry name" value="rplT_bact"/>
    <property type="match status" value="1"/>
</dbReference>
<dbReference type="PANTHER" id="PTHR10986">
    <property type="entry name" value="39S RIBOSOMAL PROTEIN L20"/>
    <property type="match status" value="1"/>
</dbReference>
<dbReference type="Pfam" id="PF00453">
    <property type="entry name" value="Ribosomal_L20"/>
    <property type="match status" value="1"/>
</dbReference>
<dbReference type="PRINTS" id="PR00062">
    <property type="entry name" value="RIBOSOMALL20"/>
</dbReference>
<dbReference type="SUPFAM" id="SSF74731">
    <property type="entry name" value="Ribosomal protein L20"/>
    <property type="match status" value="1"/>
</dbReference>
<dbReference type="PROSITE" id="PS00937">
    <property type="entry name" value="RIBOSOMAL_L20"/>
    <property type="match status" value="1"/>
</dbReference>
<gene>
    <name evidence="1" type="primary">rplT</name>
    <name type="ordered locus">BAbS19_I19860</name>
</gene>
<proteinExistence type="inferred from homology"/>